<gene>
    <name evidence="1" type="primary">rbfA</name>
    <name type="ordered locus">NTHI1835</name>
</gene>
<reference key="1">
    <citation type="journal article" date="2005" name="J. Bacteriol.">
        <title>Genomic sequence of an otitis media isolate of nontypeable Haemophilus influenzae: comparative study with H. influenzae serotype d, strain KW20.</title>
        <authorList>
            <person name="Harrison A."/>
            <person name="Dyer D.W."/>
            <person name="Gillaspy A."/>
            <person name="Ray W.C."/>
            <person name="Mungur R."/>
            <person name="Carson M.B."/>
            <person name="Zhong H."/>
            <person name="Gipson J."/>
            <person name="Gipson M."/>
            <person name="Johnson L.S."/>
            <person name="Lewis L."/>
            <person name="Bakaletz L.O."/>
            <person name="Munson R.S. Jr."/>
        </authorList>
    </citation>
    <scope>NUCLEOTIDE SEQUENCE [LARGE SCALE GENOMIC DNA]</scope>
    <source>
        <strain>86-028NP</strain>
    </source>
</reference>
<organism>
    <name type="scientific">Haemophilus influenzae (strain 86-028NP)</name>
    <dbReference type="NCBI Taxonomy" id="281310"/>
    <lineage>
        <taxon>Bacteria</taxon>
        <taxon>Pseudomonadati</taxon>
        <taxon>Pseudomonadota</taxon>
        <taxon>Gammaproteobacteria</taxon>
        <taxon>Pasteurellales</taxon>
        <taxon>Pasteurellaceae</taxon>
        <taxon>Haemophilus</taxon>
    </lineage>
</organism>
<proteinExistence type="inferred from homology"/>
<feature type="chain" id="PRO_0000102671" description="Ribosome-binding factor A">
    <location>
        <begin position="1"/>
        <end position="128"/>
    </location>
</feature>
<accession>Q4QK42</accession>
<comment type="function">
    <text evidence="1">One of several proteins that assist in the late maturation steps of the functional core of the 30S ribosomal subunit. Associates with free 30S ribosomal subunits (but not with 30S subunits that are part of 70S ribosomes or polysomes). Required for efficient processing of 16S rRNA. May interact with the 5'-terminal helix region of 16S rRNA.</text>
</comment>
<comment type="subunit">
    <text evidence="1">Monomer. Binds 30S ribosomal subunits, but not 50S ribosomal subunits or 70S ribosomes.</text>
</comment>
<comment type="subcellular location">
    <subcellularLocation>
        <location evidence="1">Cytoplasm</location>
    </subcellularLocation>
</comment>
<comment type="similarity">
    <text evidence="1">Belongs to the RbfA family.</text>
</comment>
<sequence>MAREFKRSDRVAQEIQKEIAVILQREVKDPRIGMVTVSDVEVSSDLSYAKIFVTFLFDHDETAIEQGMKGLEKASPYIRSLLGKAMRLRIVPEIRFIYDQSLVEGMRMSNLVTNVVREDEKKHVEESN</sequence>
<protein>
    <recommendedName>
        <fullName evidence="1">Ribosome-binding factor A</fullName>
    </recommendedName>
</protein>
<evidence type="ECO:0000255" key="1">
    <source>
        <dbReference type="HAMAP-Rule" id="MF_00003"/>
    </source>
</evidence>
<name>RBFA_HAEI8</name>
<keyword id="KW-0963">Cytoplasm</keyword>
<keyword id="KW-0690">Ribosome biogenesis</keyword>
<dbReference type="EMBL" id="CP000057">
    <property type="protein sequence ID" value="AAX88605.1"/>
    <property type="molecule type" value="Genomic_DNA"/>
</dbReference>
<dbReference type="RefSeq" id="WP_005628626.1">
    <property type="nucleotide sequence ID" value="NC_007146.2"/>
</dbReference>
<dbReference type="SMR" id="Q4QK42"/>
<dbReference type="GeneID" id="93220546"/>
<dbReference type="KEGG" id="hit:NTHI1835"/>
<dbReference type="HOGENOM" id="CLU_089475_5_0_6"/>
<dbReference type="Proteomes" id="UP000002525">
    <property type="component" value="Chromosome"/>
</dbReference>
<dbReference type="GO" id="GO:0005829">
    <property type="term" value="C:cytosol"/>
    <property type="evidence" value="ECO:0007669"/>
    <property type="project" value="TreeGrafter"/>
</dbReference>
<dbReference type="GO" id="GO:0043024">
    <property type="term" value="F:ribosomal small subunit binding"/>
    <property type="evidence" value="ECO:0007669"/>
    <property type="project" value="TreeGrafter"/>
</dbReference>
<dbReference type="GO" id="GO:0030490">
    <property type="term" value="P:maturation of SSU-rRNA"/>
    <property type="evidence" value="ECO:0007669"/>
    <property type="project" value="UniProtKB-UniRule"/>
</dbReference>
<dbReference type="FunFam" id="3.30.300.20:FF:000007">
    <property type="entry name" value="Ribosome-binding factor A"/>
    <property type="match status" value="1"/>
</dbReference>
<dbReference type="Gene3D" id="3.30.300.20">
    <property type="match status" value="1"/>
</dbReference>
<dbReference type="HAMAP" id="MF_00003">
    <property type="entry name" value="RbfA"/>
    <property type="match status" value="1"/>
</dbReference>
<dbReference type="InterPro" id="IPR015946">
    <property type="entry name" value="KH_dom-like_a/b"/>
</dbReference>
<dbReference type="InterPro" id="IPR000238">
    <property type="entry name" value="RbfA"/>
</dbReference>
<dbReference type="InterPro" id="IPR023799">
    <property type="entry name" value="RbfA_dom_sf"/>
</dbReference>
<dbReference type="InterPro" id="IPR020053">
    <property type="entry name" value="Ribosome-bd_factorA_CS"/>
</dbReference>
<dbReference type="NCBIfam" id="TIGR00082">
    <property type="entry name" value="rbfA"/>
    <property type="match status" value="1"/>
</dbReference>
<dbReference type="PANTHER" id="PTHR33515">
    <property type="entry name" value="RIBOSOME-BINDING FACTOR A, CHLOROPLASTIC-RELATED"/>
    <property type="match status" value="1"/>
</dbReference>
<dbReference type="PANTHER" id="PTHR33515:SF1">
    <property type="entry name" value="RIBOSOME-BINDING FACTOR A, CHLOROPLASTIC-RELATED"/>
    <property type="match status" value="1"/>
</dbReference>
<dbReference type="Pfam" id="PF02033">
    <property type="entry name" value="RBFA"/>
    <property type="match status" value="1"/>
</dbReference>
<dbReference type="SUPFAM" id="SSF89919">
    <property type="entry name" value="Ribosome-binding factor A, RbfA"/>
    <property type="match status" value="1"/>
</dbReference>
<dbReference type="PROSITE" id="PS01319">
    <property type="entry name" value="RBFA"/>
    <property type="match status" value="1"/>
</dbReference>